<dbReference type="EMBL" id="CP001015">
    <property type="protein sequence ID" value="ACF55836.1"/>
    <property type="molecule type" value="Genomic_DNA"/>
</dbReference>
<dbReference type="SMR" id="B5E3L0"/>
<dbReference type="KEGG" id="spx:SPG_0758"/>
<dbReference type="HOGENOM" id="CLU_160655_1_1_9"/>
<dbReference type="GO" id="GO:0005829">
    <property type="term" value="C:cytosol"/>
    <property type="evidence" value="ECO:0007669"/>
    <property type="project" value="TreeGrafter"/>
</dbReference>
<dbReference type="GO" id="GO:0015935">
    <property type="term" value="C:small ribosomal subunit"/>
    <property type="evidence" value="ECO:0007669"/>
    <property type="project" value="TreeGrafter"/>
</dbReference>
<dbReference type="GO" id="GO:0070181">
    <property type="term" value="F:small ribosomal subunit rRNA binding"/>
    <property type="evidence" value="ECO:0007669"/>
    <property type="project" value="TreeGrafter"/>
</dbReference>
<dbReference type="GO" id="GO:0003735">
    <property type="term" value="F:structural constituent of ribosome"/>
    <property type="evidence" value="ECO:0007669"/>
    <property type="project" value="InterPro"/>
</dbReference>
<dbReference type="GO" id="GO:0006412">
    <property type="term" value="P:translation"/>
    <property type="evidence" value="ECO:0007669"/>
    <property type="project" value="UniProtKB-UniRule"/>
</dbReference>
<dbReference type="FunFam" id="1.20.58.110:FF:000001">
    <property type="entry name" value="30S ribosomal protein S20"/>
    <property type="match status" value="1"/>
</dbReference>
<dbReference type="Gene3D" id="1.20.58.110">
    <property type="entry name" value="Ribosomal protein S20"/>
    <property type="match status" value="1"/>
</dbReference>
<dbReference type="HAMAP" id="MF_00500">
    <property type="entry name" value="Ribosomal_bS20"/>
    <property type="match status" value="1"/>
</dbReference>
<dbReference type="InterPro" id="IPR002583">
    <property type="entry name" value="Ribosomal_bS20"/>
</dbReference>
<dbReference type="InterPro" id="IPR036510">
    <property type="entry name" value="Ribosomal_bS20_sf"/>
</dbReference>
<dbReference type="NCBIfam" id="TIGR00029">
    <property type="entry name" value="S20"/>
    <property type="match status" value="1"/>
</dbReference>
<dbReference type="PANTHER" id="PTHR33398">
    <property type="entry name" value="30S RIBOSOMAL PROTEIN S20"/>
    <property type="match status" value="1"/>
</dbReference>
<dbReference type="PANTHER" id="PTHR33398:SF1">
    <property type="entry name" value="SMALL RIBOSOMAL SUBUNIT PROTEIN BS20C"/>
    <property type="match status" value="1"/>
</dbReference>
<dbReference type="Pfam" id="PF01649">
    <property type="entry name" value="Ribosomal_S20p"/>
    <property type="match status" value="1"/>
</dbReference>
<dbReference type="SUPFAM" id="SSF46992">
    <property type="entry name" value="Ribosomal protein S20"/>
    <property type="match status" value="1"/>
</dbReference>
<proteinExistence type="inferred from homology"/>
<keyword id="KW-0687">Ribonucleoprotein</keyword>
<keyword id="KW-0689">Ribosomal protein</keyword>
<keyword id="KW-0694">RNA-binding</keyword>
<keyword id="KW-0699">rRNA-binding</keyword>
<comment type="function">
    <text evidence="1">Binds directly to 16S ribosomal RNA.</text>
</comment>
<comment type="similarity">
    <text evidence="1">Belongs to the bacterial ribosomal protein bS20 family.</text>
</comment>
<gene>
    <name evidence="1" type="primary">rpsT</name>
    <name type="ordered locus">SPG_0758</name>
</gene>
<accession>B5E3L0</accession>
<organism>
    <name type="scientific">Streptococcus pneumoniae serotype 19F (strain G54)</name>
    <dbReference type="NCBI Taxonomy" id="512566"/>
    <lineage>
        <taxon>Bacteria</taxon>
        <taxon>Bacillati</taxon>
        <taxon>Bacillota</taxon>
        <taxon>Bacilli</taxon>
        <taxon>Lactobacillales</taxon>
        <taxon>Streptococcaceae</taxon>
        <taxon>Streptococcus</taxon>
    </lineage>
</organism>
<sequence length="78" mass="8556">MANIKSAIKRAELNVKQNEKNSAQKSAMRTAIKAFEANPSEELFRAASSAIDKAETKGLIHKNKASRDKARLSTKLAK</sequence>
<reference key="1">
    <citation type="journal article" date="2001" name="Microb. Drug Resist.">
        <title>Annotated draft genomic sequence from a Streptococcus pneumoniae type 19F clinical isolate.</title>
        <authorList>
            <person name="Dopazo J."/>
            <person name="Mendoza A."/>
            <person name="Herrero J."/>
            <person name="Caldara F."/>
            <person name="Humbert Y."/>
            <person name="Friedli L."/>
            <person name="Guerrier M."/>
            <person name="Grand-Schenk E."/>
            <person name="Gandin C."/>
            <person name="de Francesco M."/>
            <person name="Polissi A."/>
            <person name="Buell G."/>
            <person name="Feger G."/>
            <person name="Garcia E."/>
            <person name="Peitsch M."/>
            <person name="Garcia-Bustos J.F."/>
        </authorList>
    </citation>
    <scope>NUCLEOTIDE SEQUENCE [LARGE SCALE GENOMIC DNA]</scope>
    <source>
        <strain>G54</strain>
    </source>
</reference>
<reference key="2">
    <citation type="submission" date="2008-03" db="EMBL/GenBank/DDBJ databases">
        <title>Pneumococcal beta glucoside metabolism investigated by whole genome comparison.</title>
        <authorList>
            <person name="Mulas L."/>
            <person name="Trappetti C."/>
            <person name="Hakenbeck R."/>
            <person name="Iannelli F."/>
            <person name="Pozzi G."/>
            <person name="Davidsen T.M."/>
            <person name="Tettelin H."/>
            <person name="Oggioni M."/>
        </authorList>
    </citation>
    <scope>NUCLEOTIDE SEQUENCE [LARGE SCALE GENOMIC DNA]</scope>
    <source>
        <strain>G54</strain>
    </source>
</reference>
<protein>
    <recommendedName>
        <fullName evidence="1">Small ribosomal subunit protein bS20</fullName>
    </recommendedName>
    <alternativeName>
        <fullName evidence="2">30S ribosomal protein S20</fullName>
    </alternativeName>
</protein>
<feature type="chain" id="PRO_1000126523" description="Small ribosomal subunit protein bS20">
    <location>
        <begin position="1"/>
        <end position="78"/>
    </location>
</feature>
<evidence type="ECO:0000255" key="1">
    <source>
        <dbReference type="HAMAP-Rule" id="MF_00500"/>
    </source>
</evidence>
<evidence type="ECO:0000305" key="2"/>
<name>RS20_STRP4</name>